<reference key="1">
    <citation type="journal article" date="2006" name="Proc. Natl. Acad. Sci. U.S.A.">
        <title>Molecular genetic anatomy of inter- and intraserotype variation in the human bacterial pathogen group A Streptococcus.</title>
        <authorList>
            <person name="Beres S.B."/>
            <person name="Richter E.W."/>
            <person name="Nagiec M.J."/>
            <person name="Sumby P."/>
            <person name="Porcella S.F."/>
            <person name="DeLeo F.R."/>
            <person name="Musser J.M."/>
        </authorList>
    </citation>
    <scope>NUCLEOTIDE SEQUENCE [LARGE SCALE GENOMIC DNA]</scope>
    <source>
        <strain>MGAS10270</strain>
    </source>
</reference>
<feature type="chain" id="PRO_0000329270" description="Phosphate acyltransferase">
    <location>
        <begin position="1"/>
        <end position="335"/>
    </location>
</feature>
<accession>Q1JJ88</accession>
<name>PLSX_STRPD</name>
<protein>
    <recommendedName>
        <fullName evidence="1">Phosphate acyltransferase</fullName>
        <ecNumber evidence="1">2.3.1.274</ecNumber>
    </recommendedName>
    <alternativeName>
        <fullName evidence="1">Acyl-ACP phosphotransacylase</fullName>
    </alternativeName>
    <alternativeName>
        <fullName evidence="1">Acyl-[acyl-carrier-protein]--phosphate acyltransferase</fullName>
    </alternativeName>
    <alternativeName>
        <fullName evidence="1">Phosphate-acyl-ACP acyltransferase</fullName>
    </alternativeName>
</protein>
<gene>
    <name evidence="1" type="primary">plsX</name>
    <name type="ordered locus">MGAS10270_Spy0020</name>
</gene>
<organism>
    <name type="scientific">Streptococcus pyogenes serotype M2 (strain MGAS10270)</name>
    <dbReference type="NCBI Taxonomy" id="370552"/>
    <lineage>
        <taxon>Bacteria</taxon>
        <taxon>Bacillati</taxon>
        <taxon>Bacillota</taxon>
        <taxon>Bacilli</taxon>
        <taxon>Lactobacillales</taxon>
        <taxon>Streptococcaceae</taxon>
        <taxon>Streptococcus</taxon>
    </lineage>
</organism>
<comment type="function">
    <text evidence="1">Catalyzes the reversible formation of acyl-phosphate (acyl-PO(4)) from acyl-[acyl-carrier-protein] (acyl-ACP). This enzyme utilizes acyl-ACP as fatty acyl donor, but not acyl-CoA.</text>
</comment>
<comment type="catalytic activity">
    <reaction evidence="1">
        <text>a fatty acyl-[ACP] + phosphate = an acyl phosphate + holo-[ACP]</text>
        <dbReference type="Rhea" id="RHEA:42292"/>
        <dbReference type="Rhea" id="RHEA-COMP:9685"/>
        <dbReference type="Rhea" id="RHEA-COMP:14125"/>
        <dbReference type="ChEBI" id="CHEBI:43474"/>
        <dbReference type="ChEBI" id="CHEBI:59918"/>
        <dbReference type="ChEBI" id="CHEBI:64479"/>
        <dbReference type="ChEBI" id="CHEBI:138651"/>
        <dbReference type="EC" id="2.3.1.274"/>
    </reaction>
</comment>
<comment type="pathway">
    <text evidence="1">Lipid metabolism; phospholipid metabolism.</text>
</comment>
<comment type="subunit">
    <text evidence="1">Homodimer. Probably interacts with PlsY.</text>
</comment>
<comment type="subcellular location">
    <subcellularLocation>
        <location evidence="1">Cytoplasm</location>
    </subcellularLocation>
    <text evidence="1">Associated with the membrane possibly through PlsY.</text>
</comment>
<comment type="similarity">
    <text evidence="1">Belongs to the PlsX family.</text>
</comment>
<comment type="sequence caution" evidence="2">
    <conflict type="erroneous initiation">
        <sequence resource="EMBL-CDS" id="ABF33085"/>
    </conflict>
</comment>
<evidence type="ECO:0000255" key="1">
    <source>
        <dbReference type="HAMAP-Rule" id="MF_00019"/>
    </source>
</evidence>
<evidence type="ECO:0000305" key="2"/>
<proteinExistence type="inferred from homology"/>
<dbReference type="EC" id="2.3.1.274" evidence="1"/>
<dbReference type="EMBL" id="CP000260">
    <property type="protein sequence ID" value="ABF33085.1"/>
    <property type="status" value="ALT_INIT"/>
    <property type="molecule type" value="Genomic_DNA"/>
</dbReference>
<dbReference type="SMR" id="Q1JJ88"/>
<dbReference type="KEGG" id="sph:MGAS10270_Spy0020"/>
<dbReference type="HOGENOM" id="CLU_039379_1_1_9"/>
<dbReference type="UniPathway" id="UPA00085"/>
<dbReference type="Proteomes" id="UP000002436">
    <property type="component" value="Chromosome"/>
</dbReference>
<dbReference type="GO" id="GO:0005737">
    <property type="term" value="C:cytoplasm"/>
    <property type="evidence" value="ECO:0007669"/>
    <property type="project" value="UniProtKB-SubCell"/>
</dbReference>
<dbReference type="GO" id="GO:0043811">
    <property type="term" value="F:phosphate:acyl-[acyl carrier protein] acyltransferase activity"/>
    <property type="evidence" value="ECO:0007669"/>
    <property type="project" value="UniProtKB-UniRule"/>
</dbReference>
<dbReference type="GO" id="GO:0006633">
    <property type="term" value="P:fatty acid biosynthetic process"/>
    <property type="evidence" value="ECO:0007669"/>
    <property type="project" value="UniProtKB-UniRule"/>
</dbReference>
<dbReference type="GO" id="GO:0008654">
    <property type="term" value="P:phospholipid biosynthetic process"/>
    <property type="evidence" value="ECO:0007669"/>
    <property type="project" value="UniProtKB-KW"/>
</dbReference>
<dbReference type="Gene3D" id="3.40.718.10">
    <property type="entry name" value="Isopropylmalate Dehydrogenase"/>
    <property type="match status" value="1"/>
</dbReference>
<dbReference type="HAMAP" id="MF_00019">
    <property type="entry name" value="PlsX"/>
    <property type="match status" value="1"/>
</dbReference>
<dbReference type="InterPro" id="IPR003664">
    <property type="entry name" value="FA_synthesis"/>
</dbReference>
<dbReference type="InterPro" id="IPR012281">
    <property type="entry name" value="Phospholipid_synth_PlsX-like"/>
</dbReference>
<dbReference type="NCBIfam" id="TIGR00182">
    <property type="entry name" value="plsX"/>
    <property type="match status" value="1"/>
</dbReference>
<dbReference type="PANTHER" id="PTHR30100">
    <property type="entry name" value="FATTY ACID/PHOSPHOLIPID SYNTHESIS PROTEIN PLSX"/>
    <property type="match status" value="1"/>
</dbReference>
<dbReference type="PANTHER" id="PTHR30100:SF1">
    <property type="entry name" value="PHOSPHATE ACYLTRANSFERASE"/>
    <property type="match status" value="1"/>
</dbReference>
<dbReference type="Pfam" id="PF02504">
    <property type="entry name" value="FA_synthesis"/>
    <property type="match status" value="1"/>
</dbReference>
<dbReference type="PIRSF" id="PIRSF002465">
    <property type="entry name" value="Phsphlp_syn_PlsX"/>
    <property type="match status" value="1"/>
</dbReference>
<dbReference type="SUPFAM" id="SSF53659">
    <property type="entry name" value="Isocitrate/Isopropylmalate dehydrogenase-like"/>
    <property type="match status" value="1"/>
</dbReference>
<sequence>MKRIAIDAMGGDNAPKAIVEGVNQAIEAFSDIEIQLYGDQTKINSYLIQSDRVAIIHTDEKIMSDDEPAKAVRRKKKASMVLAAKAVKEGKADAIISAGNTGALLAVGLFVVGRIKGVDRPGLLSTIPTVTGLGFDMLDLGANAENTAKHLHQYAILGSFYAKNVRGIANPRVGLLNNGTEETKGDPLRKATYELLTADNTISFVGNVEARELMSGVADVIVSDGFTGNAVLKSIEGTAISIMGQLKQIINSGGIKTKIGASLLKSSLYEMKKTLDYSSAGGAVLFGLKAPVVKSHGSSDVKAIFSTIKQVRTMLDTNVVGQLVEEFAKETQVND</sequence>
<keyword id="KW-0963">Cytoplasm</keyword>
<keyword id="KW-0444">Lipid biosynthesis</keyword>
<keyword id="KW-0443">Lipid metabolism</keyword>
<keyword id="KW-0594">Phospholipid biosynthesis</keyword>
<keyword id="KW-1208">Phospholipid metabolism</keyword>
<keyword id="KW-0808">Transferase</keyword>